<gene>
    <name type="primary">BUD3</name>
    <name type="ordered locus">DEHA2G11000g</name>
</gene>
<proteinExistence type="inferred from homology"/>
<reference key="1">
    <citation type="journal article" date="2004" name="Nature">
        <title>Genome evolution in yeasts.</title>
        <authorList>
            <person name="Dujon B."/>
            <person name="Sherman D."/>
            <person name="Fischer G."/>
            <person name="Durrens P."/>
            <person name="Casaregola S."/>
            <person name="Lafontaine I."/>
            <person name="de Montigny J."/>
            <person name="Marck C."/>
            <person name="Neuveglise C."/>
            <person name="Talla E."/>
            <person name="Goffard N."/>
            <person name="Frangeul L."/>
            <person name="Aigle M."/>
            <person name="Anthouard V."/>
            <person name="Babour A."/>
            <person name="Barbe V."/>
            <person name="Barnay S."/>
            <person name="Blanchin S."/>
            <person name="Beckerich J.-M."/>
            <person name="Beyne E."/>
            <person name="Bleykasten C."/>
            <person name="Boisrame A."/>
            <person name="Boyer J."/>
            <person name="Cattolico L."/>
            <person name="Confanioleri F."/>
            <person name="de Daruvar A."/>
            <person name="Despons L."/>
            <person name="Fabre E."/>
            <person name="Fairhead C."/>
            <person name="Ferry-Dumazet H."/>
            <person name="Groppi A."/>
            <person name="Hantraye F."/>
            <person name="Hennequin C."/>
            <person name="Jauniaux N."/>
            <person name="Joyet P."/>
            <person name="Kachouri R."/>
            <person name="Kerrest A."/>
            <person name="Koszul R."/>
            <person name="Lemaire M."/>
            <person name="Lesur I."/>
            <person name="Ma L."/>
            <person name="Muller H."/>
            <person name="Nicaud J.-M."/>
            <person name="Nikolski M."/>
            <person name="Oztas S."/>
            <person name="Ozier-Kalogeropoulos O."/>
            <person name="Pellenz S."/>
            <person name="Potier S."/>
            <person name="Richard G.-F."/>
            <person name="Straub M.-L."/>
            <person name="Suleau A."/>
            <person name="Swennen D."/>
            <person name="Tekaia F."/>
            <person name="Wesolowski-Louvel M."/>
            <person name="Westhof E."/>
            <person name="Wirth B."/>
            <person name="Zeniou-Meyer M."/>
            <person name="Zivanovic Y."/>
            <person name="Bolotin-Fukuhara M."/>
            <person name="Thierry A."/>
            <person name="Bouchier C."/>
            <person name="Caudron B."/>
            <person name="Scarpelli C."/>
            <person name="Gaillardin C."/>
            <person name="Weissenbach J."/>
            <person name="Wincker P."/>
            <person name="Souciet J.-L."/>
        </authorList>
    </citation>
    <scope>NUCLEOTIDE SEQUENCE [LARGE SCALE GENOMIC DNA]</scope>
    <source>
        <strain>ATCC 36239 / CBS 767 / BCRC 21394 / JCM 1990 / NBRC 0083 / IGC 2968</strain>
    </source>
</reference>
<comment type="function">
    <text evidence="1">Co-assembles with BUD4 at bud sites. BUD4 and BUD3 may cooperate to recognize a spatial landmark (the neck filaments) during mitosis and they subsequently become a landmark for establishing the axial budding pattern in G1 (By similarity).</text>
</comment>
<comment type="similarity">
    <text evidence="3">Belongs to the BUD3 family.</text>
</comment>
<keyword id="KW-0131">Cell cycle</keyword>
<keyword id="KW-1185">Reference proteome</keyword>
<evidence type="ECO:0000250" key="1"/>
<evidence type="ECO:0000256" key="2">
    <source>
        <dbReference type="SAM" id="MobiDB-lite"/>
    </source>
</evidence>
<evidence type="ECO:0000305" key="3"/>
<organism>
    <name type="scientific">Debaryomyces hansenii (strain ATCC 36239 / CBS 767 / BCRC 21394 / JCM 1990 / NBRC 0083 / IGC 2968)</name>
    <name type="common">Yeast</name>
    <name type="synonym">Torulaspora hansenii</name>
    <dbReference type="NCBI Taxonomy" id="284592"/>
    <lineage>
        <taxon>Eukaryota</taxon>
        <taxon>Fungi</taxon>
        <taxon>Dikarya</taxon>
        <taxon>Ascomycota</taxon>
        <taxon>Saccharomycotina</taxon>
        <taxon>Pichiomycetes</taxon>
        <taxon>Debaryomycetaceae</taxon>
        <taxon>Debaryomyces</taxon>
    </lineage>
</organism>
<protein>
    <recommendedName>
        <fullName>Bud site selection protein 3</fullName>
    </recommendedName>
</protein>
<name>BUD3_DEBHA</name>
<accession>Q6BIF0</accession>
<accession>B5RUQ3</accession>
<feature type="chain" id="PRO_0000295639" description="Bud site selection protein 3">
    <location>
        <begin position="1"/>
        <end position="1345"/>
    </location>
</feature>
<feature type="region of interest" description="Disordered" evidence="2">
    <location>
        <begin position="843"/>
        <end position="939"/>
    </location>
</feature>
<feature type="region of interest" description="Disordered" evidence="2">
    <location>
        <begin position="951"/>
        <end position="998"/>
    </location>
</feature>
<feature type="compositionally biased region" description="Basic and acidic residues" evidence="2">
    <location>
        <begin position="854"/>
        <end position="867"/>
    </location>
</feature>
<feature type="compositionally biased region" description="Basic and acidic residues" evidence="2">
    <location>
        <begin position="874"/>
        <end position="892"/>
    </location>
</feature>
<feature type="compositionally biased region" description="Basic residues" evidence="2">
    <location>
        <begin position="893"/>
        <end position="903"/>
    </location>
</feature>
<feature type="compositionally biased region" description="Polar residues" evidence="2">
    <location>
        <begin position="910"/>
        <end position="935"/>
    </location>
</feature>
<feature type="compositionally biased region" description="Low complexity" evidence="2">
    <location>
        <begin position="961"/>
        <end position="980"/>
    </location>
</feature>
<dbReference type="EMBL" id="CR382139">
    <property type="protein sequence ID" value="CAR65947.1"/>
    <property type="molecule type" value="Genomic_DNA"/>
</dbReference>
<dbReference type="RefSeq" id="XP_002770613.1">
    <property type="nucleotide sequence ID" value="XM_002770567.1"/>
</dbReference>
<dbReference type="FunCoup" id="Q6BIF0">
    <property type="interactions" value="160"/>
</dbReference>
<dbReference type="STRING" id="284592.Q6BIF0"/>
<dbReference type="GeneID" id="8999172"/>
<dbReference type="KEGG" id="dha:DEHA2G11000g"/>
<dbReference type="VEuPathDB" id="FungiDB:DEHA2G11000g"/>
<dbReference type="eggNOG" id="ENOG502QSNK">
    <property type="taxonomic scope" value="Eukaryota"/>
</dbReference>
<dbReference type="HOGENOM" id="CLU_004185_0_0_1"/>
<dbReference type="InParanoid" id="Q6BIF0"/>
<dbReference type="OMA" id="LATNWPA"/>
<dbReference type="OrthoDB" id="4066896at2759"/>
<dbReference type="Proteomes" id="UP000000599">
    <property type="component" value="Chromosome G"/>
</dbReference>
<dbReference type="GO" id="GO:0005085">
    <property type="term" value="F:guanyl-nucleotide exchange factor activity"/>
    <property type="evidence" value="ECO:0007669"/>
    <property type="project" value="InterPro"/>
</dbReference>
<dbReference type="InterPro" id="IPR021895">
    <property type="entry name" value="Bud3_N"/>
</dbReference>
<dbReference type="InterPro" id="IPR000219">
    <property type="entry name" value="DH_dom"/>
</dbReference>
<dbReference type="Pfam" id="PF12015">
    <property type="entry name" value="Bud3_N"/>
    <property type="match status" value="1"/>
</dbReference>
<dbReference type="Pfam" id="PF25351">
    <property type="entry name" value="PH_BUD3_C"/>
    <property type="match status" value="1"/>
</dbReference>
<dbReference type="SMART" id="SM00325">
    <property type="entry name" value="RhoGEF"/>
    <property type="match status" value="1"/>
</dbReference>
<sequence>MSVYHRYASGEYDKTYFEKASESRKHDDKVGRIQISPLLGQFSTSDTLYKFKEKSIEEWLAIFPKAAYFKGYDESLFGNVIIMVYENSHTGKLNTTSFSKFGVTSYDNLVLDARSRFWPSCENLLPSYQKSNVRRSLAITNLKNYNKLVNSPGNFYVNKSWDETYAGSLANNMQLISEKKPEKFGLKLLELGLLQTHCIQSTVLDVIYDNASSETSDKIVEENNKLVFLIGSQLEQLFDPLLEYSPEIMEFSYTVPVDAISPQIKNNELINTIISELLTVQTNFTMRLVNLLQNFIIPLRIHVLAATSSSGITKINQVFPPTIDEITRINCILHDSLKKASAFGYVEIMKAVGTIMPYFYKAFIRHEANLKNFRDNLAKFHSKNNKKIFENTMINKGNLGIRDIDSIVAGSLLELPKLKLILVRLKDSIIFEKTKLSNFEDDPSNEFFTIEKYFNSAVDVIDAFGFEEENNQTKIDIRQRVFTPTGKILTELASNWPPELQYGWLARKVVGIYEMRNIKPLNDTFYDLDILIIFSDHILFLTIVDDSYYNERNNESMKNLCVSDILMHSLVNDKPLPNLKSLPTMEVNCWCIINEVITTTYKGVSPITSKTQEFLKFVNISKTGFKNNNAENSTISKNYEILDGSDRGNVDGCKIIELINKSTVLNKRKPFHLFRSNDPKLHIYSIAQELSAYQEESCKSPMALYLNLSIHDPKKYFEENQTVHFVLNASFINDHQIHMVGFNRAETFELNEIISSNDLQVCLKEVIVKNFSLLFNTFSNISKMLTQGYAYDINYCANIFTQIDEIKLNEHRQEIAKNKSTDSISRPKTRNVSEIISIPEVYMNKISPSNTNTRDQRSQQRRTEKRLSTRSKNNSRDVEVKKSSQERPDKRNSMIKKVFRSLRRSFDGIENSTPKTEIHENNNTSKLQDSSSFSGKKNEYTSLYKPVPQLQTKEQKHVHEQVQVQEQGQGQGQGQEQEQGQEQEKEQEQSFSEANIPRDIDNYTGIQMRKECNNSVQQSRNTSGSLDVNSHFEFPPHLDSSFGSNNNTIILVNDNENRHKNRPAPEKISILDSTDDHSSNIPRRSENVGYGKFNVEDFYDDGEANWVSISNENYSLLNAEIRALKEEAHMDTEDIIELNDSDNITEDEMRDVYESKDFDAFYTPQNQSVAQFGDNPTSLKNENREMSTQSLASSEIIEVFGKQIDSNFRSDYIPNLNENLHSINSNKKFGFQNDHRFSVLTSSDDEFFSSDDFASSLPIERQENKKSHSPMIMNSSSSDATIINENFEEKLLPATPIDCDDKVLPSSQIHKNMQSSSIRSDSFSTTYESMTYLSEILNGHLNFSD</sequence>